<proteinExistence type="inferred from homology"/>
<gene>
    <name evidence="1" type="primary">prmA</name>
    <name type="ordered locus">YPTS_3763</name>
</gene>
<comment type="function">
    <text evidence="1">Methylates ribosomal protein L11.</text>
</comment>
<comment type="catalytic activity">
    <reaction evidence="1">
        <text>L-lysyl-[protein] + 3 S-adenosyl-L-methionine = N(6),N(6),N(6)-trimethyl-L-lysyl-[protein] + 3 S-adenosyl-L-homocysteine + 3 H(+)</text>
        <dbReference type="Rhea" id="RHEA:54192"/>
        <dbReference type="Rhea" id="RHEA-COMP:9752"/>
        <dbReference type="Rhea" id="RHEA-COMP:13826"/>
        <dbReference type="ChEBI" id="CHEBI:15378"/>
        <dbReference type="ChEBI" id="CHEBI:29969"/>
        <dbReference type="ChEBI" id="CHEBI:57856"/>
        <dbReference type="ChEBI" id="CHEBI:59789"/>
        <dbReference type="ChEBI" id="CHEBI:61961"/>
    </reaction>
</comment>
<comment type="subcellular location">
    <subcellularLocation>
        <location evidence="1">Cytoplasm</location>
    </subcellularLocation>
</comment>
<comment type="similarity">
    <text evidence="1">Belongs to the methyltransferase superfamily. PrmA family.</text>
</comment>
<evidence type="ECO:0000255" key="1">
    <source>
        <dbReference type="HAMAP-Rule" id="MF_00735"/>
    </source>
</evidence>
<feature type="chain" id="PRO_1000132844" description="Ribosomal protein L11 methyltransferase">
    <location>
        <begin position="1"/>
        <end position="293"/>
    </location>
</feature>
<feature type="binding site" evidence="1">
    <location>
        <position position="145"/>
    </location>
    <ligand>
        <name>S-adenosyl-L-methionine</name>
        <dbReference type="ChEBI" id="CHEBI:59789"/>
    </ligand>
</feature>
<feature type="binding site" evidence="1">
    <location>
        <position position="166"/>
    </location>
    <ligand>
        <name>S-adenosyl-L-methionine</name>
        <dbReference type="ChEBI" id="CHEBI:59789"/>
    </ligand>
</feature>
<feature type="binding site" evidence="1">
    <location>
        <position position="188"/>
    </location>
    <ligand>
        <name>S-adenosyl-L-methionine</name>
        <dbReference type="ChEBI" id="CHEBI:59789"/>
    </ligand>
</feature>
<feature type="binding site" evidence="1">
    <location>
        <position position="230"/>
    </location>
    <ligand>
        <name>S-adenosyl-L-methionine</name>
        <dbReference type="ChEBI" id="CHEBI:59789"/>
    </ligand>
</feature>
<reference key="1">
    <citation type="submission" date="2008-04" db="EMBL/GenBank/DDBJ databases">
        <title>Complete sequence of Yersinia pseudotuberculosis PB1/+.</title>
        <authorList>
            <person name="Copeland A."/>
            <person name="Lucas S."/>
            <person name="Lapidus A."/>
            <person name="Glavina del Rio T."/>
            <person name="Dalin E."/>
            <person name="Tice H."/>
            <person name="Bruce D."/>
            <person name="Goodwin L."/>
            <person name="Pitluck S."/>
            <person name="Munk A.C."/>
            <person name="Brettin T."/>
            <person name="Detter J.C."/>
            <person name="Han C."/>
            <person name="Tapia R."/>
            <person name="Schmutz J."/>
            <person name="Larimer F."/>
            <person name="Land M."/>
            <person name="Hauser L."/>
            <person name="Challacombe J.F."/>
            <person name="Green L."/>
            <person name="Lindler L.E."/>
            <person name="Nikolich M.P."/>
            <person name="Richardson P."/>
        </authorList>
    </citation>
    <scope>NUCLEOTIDE SEQUENCE [LARGE SCALE GENOMIC DNA]</scope>
    <source>
        <strain>PB1/+</strain>
    </source>
</reference>
<dbReference type="EC" id="2.1.1.-" evidence="1"/>
<dbReference type="EMBL" id="CP001048">
    <property type="protein sequence ID" value="ACC90716.1"/>
    <property type="molecule type" value="Genomic_DNA"/>
</dbReference>
<dbReference type="RefSeq" id="WP_011193166.1">
    <property type="nucleotide sequence ID" value="NZ_CP009780.1"/>
</dbReference>
<dbReference type="SMR" id="B2K467"/>
<dbReference type="KEGG" id="ypb:YPTS_3763"/>
<dbReference type="PATRIC" id="fig|502801.10.peg.3223"/>
<dbReference type="GO" id="GO:0005829">
    <property type="term" value="C:cytosol"/>
    <property type="evidence" value="ECO:0007669"/>
    <property type="project" value="TreeGrafter"/>
</dbReference>
<dbReference type="GO" id="GO:0016279">
    <property type="term" value="F:protein-lysine N-methyltransferase activity"/>
    <property type="evidence" value="ECO:0007669"/>
    <property type="project" value="TreeGrafter"/>
</dbReference>
<dbReference type="GO" id="GO:0032259">
    <property type="term" value="P:methylation"/>
    <property type="evidence" value="ECO:0007669"/>
    <property type="project" value="UniProtKB-KW"/>
</dbReference>
<dbReference type="CDD" id="cd02440">
    <property type="entry name" value="AdoMet_MTases"/>
    <property type="match status" value="1"/>
</dbReference>
<dbReference type="Gene3D" id="3.40.50.150">
    <property type="entry name" value="Vaccinia Virus protein VP39"/>
    <property type="match status" value="1"/>
</dbReference>
<dbReference type="HAMAP" id="MF_00735">
    <property type="entry name" value="Methyltr_PrmA"/>
    <property type="match status" value="1"/>
</dbReference>
<dbReference type="InterPro" id="IPR050078">
    <property type="entry name" value="Ribosomal_L11_MeTrfase_PrmA"/>
</dbReference>
<dbReference type="InterPro" id="IPR004498">
    <property type="entry name" value="Ribosomal_PrmA_MeTrfase"/>
</dbReference>
<dbReference type="InterPro" id="IPR029063">
    <property type="entry name" value="SAM-dependent_MTases_sf"/>
</dbReference>
<dbReference type="NCBIfam" id="TIGR00406">
    <property type="entry name" value="prmA"/>
    <property type="match status" value="1"/>
</dbReference>
<dbReference type="PANTHER" id="PTHR43648">
    <property type="entry name" value="ELECTRON TRANSFER FLAVOPROTEIN BETA SUBUNIT LYSINE METHYLTRANSFERASE"/>
    <property type="match status" value="1"/>
</dbReference>
<dbReference type="PANTHER" id="PTHR43648:SF1">
    <property type="entry name" value="ELECTRON TRANSFER FLAVOPROTEIN BETA SUBUNIT LYSINE METHYLTRANSFERASE"/>
    <property type="match status" value="1"/>
</dbReference>
<dbReference type="Pfam" id="PF06325">
    <property type="entry name" value="PrmA"/>
    <property type="match status" value="1"/>
</dbReference>
<dbReference type="PIRSF" id="PIRSF000401">
    <property type="entry name" value="RPL11_MTase"/>
    <property type="match status" value="1"/>
</dbReference>
<dbReference type="SUPFAM" id="SSF53335">
    <property type="entry name" value="S-adenosyl-L-methionine-dependent methyltransferases"/>
    <property type="match status" value="1"/>
</dbReference>
<name>PRMA_YERPB</name>
<organism>
    <name type="scientific">Yersinia pseudotuberculosis serotype IB (strain PB1/+)</name>
    <dbReference type="NCBI Taxonomy" id="502801"/>
    <lineage>
        <taxon>Bacteria</taxon>
        <taxon>Pseudomonadati</taxon>
        <taxon>Pseudomonadota</taxon>
        <taxon>Gammaproteobacteria</taxon>
        <taxon>Enterobacterales</taxon>
        <taxon>Yersiniaceae</taxon>
        <taxon>Yersinia</taxon>
    </lineage>
</organism>
<accession>B2K467</accession>
<protein>
    <recommendedName>
        <fullName evidence="1">Ribosomal protein L11 methyltransferase</fullName>
        <shortName evidence="1">L11 Mtase</shortName>
        <ecNumber evidence="1">2.1.1.-</ecNumber>
    </recommendedName>
</protein>
<keyword id="KW-0963">Cytoplasm</keyword>
<keyword id="KW-0489">Methyltransferase</keyword>
<keyword id="KW-0949">S-adenosyl-L-methionine</keyword>
<keyword id="KW-0808">Transferase</keyword>
<sequence>MPWIQLKLNTTGNQAESLGDVLVESGAVSVTFQDTHDNPVFEPLPGETRLWGDTDVIGLYDAETDMADVVAMLECHPQIGKGFIHKIEQLEDKDWEREWMDNFHPMRFGERLWICPSWRDVPDPTAVNVMLDPGLAFGTGTHPTTALCLQWLDSLDLNGKTLIDFGCGSGILAIAALKLGAARAIGIDIDPQAIQASRDNAQRNGVSERLELYLAKDQPAELSADVVVANILAGPLRELALLISVLPTTGGHLGLSGVLATQAAGVAQAYEDKFILDPVAEKEEWCRITGIKK</sequence>